<comment type="function">
    <text evidence="1">Catalyzes the reversible adenylation of nicotinate mononucleotide (NaMN) to nicotinic acid adenine dinucleotide (NaAD).</text>
</comment>
<comment type="catalytic activity">
    <reaction evidence="1">
        <text>nicotinate beta-D-ribonucleotide + ATP + H(+) = deamido-NAD(+) + diphosphate</text>
        <dbReference type="Rhea" id="RHEA:22860"/>
        <dbReference type="ChEBI" id="CHEBI:15378"/>
        <dbReference type="ChEBI" id="CHEBI:30616"/>
        <dbReference type="ChEBI" id="CHEBI:33019"/>
        <dbReference type="ChEBI" id="CHEBI:57502"/>
        <dbReference type="ChEBI" id="CHEBI:58437"/>
        <dbReference type="EC" id="2.7.7.18"/>
    </reaction>
</comment>
<comment type="pathway">
    <text evidence="1">Cofactor biosynthesis; NAD(+) biosynthesis; deamido-NAD(+) from nicotinate D-ribonucleotide: step 1/1.</text>
</comment>
<comment type="similarity">
    <text evidence="1">Belongs to the NadD family.</text>
</comment>
<keyword id="KW-0067">ATP-binding</keyword>
<keyword id="KW-0520">NAD</keyword>
<keyword id="KW-0547">Nucleotide-binding</keyword>
<keyword id="KW-0548">Nucleotidyltransferase</keyword>
<keyword id="KW-0662">Pyridine nucleotide biosynthesis</keyword>
<keyword id="KW-1185">Reference proteome</keyword>
<keyword id="KW-0808">Transferase</keyword>
<reference key="1">
    <citation type="journal article" date="2003" name="Nat. Genet.">
        <title>Comparative analysis of the genome sequences of Bordetella pertussis, Bordetella parapertussis and Bordetella bronchiseptica.</title>
        <authorList>
            <person name="Parkhill J."/>
            <person name="Sebaihia M."/>
            <person name="Preston A."/>
            <person name="Murphy L.D."/>
            <person name="Thomson N.R."/>
            <person name="Harris D.E."/>
            <person name="Holden M.T.G."/>
            <person name="Churcher C.M."/>
            <person name="Bentley S.D."/>
            <person name="Mungall K.L."/>
            <person name="Cerdeno-Tarraga A.-M."/>
            <person name="Temple L."/>
            <person name="James K.D."/>
            <person name="Harris B."/>
            <person name="Quail M.A."/>
            <person name="Achtman M."/>
            <person name="Atkin R."/>
            <person name="Baker S."/>
            <person name="Basham D."/>
            <person name="Bason N."/>
            <person name="Cherevach I."/>
            <person name="Chillingworth T."/>
            <person name="Collins M."/>
            <person name="Cronin A."/>
            <person name="Davis P."/>
            <person name="Doggett J."/>
            <person name="Feltwell T."/>
            <person name="Goble A."/>
            <person name="Hamlin N."/>
            <person name="Hauser H."/>
            <person name="Holroyd S."/>
            <person name="Jagels K."/>
            <person name="Leather S."/>
            <person name="Moule S."/>
            <person name="Norberczak H."/>
            <person name="O'Neil S."/>
            <person name="Ormond D."/>
            <person name="Price C."/>
            <person name="Rabbinowitsch E."/>
            <person name="Rutter S."/>
            <person name="Sanders M."/>
            <person name="Saunders D."/>
            <person name="Seeger K."/>
            <person name="Sharp S."/>
            <person name="Simmonds M."/>
            <person name="Skelton J."/>
            <person name="Squares R."/>
            <person name="Squares S."/>
            <person name="Stevens K."/>
            <person name="Unwin L."/>
            <person name="Whitehead S."/>
            <person name="Barrell B.G."/>
            <person name="Maskell D.J."/>
        </authorList>
    </citation>
    <scope>NUCLEOTIDE SEQUENCE [LARGE SCALE GENOMIC DNA]</scope>
    <source>
        <strain>Tohama I / ATCC BAA-589 / NCTC 13251</strain>
    </source>
</reference>
<feature type="chain" id="PRO_0000181392" description="Probable nicotinate-nucleotide adenylyltransferase">
    <location>
        <begin position="1"/>
        <end position="197"/>
    </location>
</feature>
<proteinExistence type="inferred from homology"/>
<gene>
    <name evidence="1" type="primary">nadD</name>
    <name type="ordered locus">BP2311</name>
</gene>
<name>NADD_BORPE</name>
<organism>
    <name type="scientific">Bordetella pertussis (strain Tohama I / ATCC BAA-589 / NCTC 13251)</name>
    <dbReference type="NCBI Taxonomy" id="257313"/>
    <lineage>
        <taxon>Bacteria</taxon>
        <taxon>Pseudomonadati</taxon>
        <taxon>Pseudomonadota</taxon>
        <taxon>Betaproteobacteria</taxon>
        <taxon>Burkholderiales</taxon>
        <taxon>Alcaligenaceae</taxon>
        <taxon>Bordetella</taxon>
    </lineage>
</organism>
<dbReference type="EC" id="2.7.7.18" evidence="1"/>
<dbReference type="EMBL" id="BX640418">
    <property type="protein sequence ID" value="CAE42584.1"/>
    <property type="molecule type" value="Genomic_DNA"/>
</dbReference>
<dbReference type="RefSeq" id="NP_880949.1">
    <property type="nucleotide sequence ID" value="NC_002929.2"/>
</dbReference>
<dbReference type="RefSeq" id="WP_010930864.1">
    <property type="nucleotide sequence ID" value="NZ_CP039022.1"/>
</dbReference>
<dbReference type="SMR" id="Q7VWE6"/>
<dbReference type="STRING" id="257313.BP2311"/>
<dbReference type="PaxDb" id="257313-BP2311"/>
<dbReference type="GeneID" id="69602208"/>
<dbReference type="KEGG" id="bpe:BP2311"/>
<dbReference type="PATRIC" id="fig|257313.5.peg.2491"/>
<dbReference type="eggNOG" id="COG1057">
    <property type="taxonomic scope" value="Bacteria"/>
</dbReference>
<dbReference type="HOGENOM" id="CLU_069765_0_0_4"/>
<dbReference type="UniPathway" id="UPA00253">
    <property type="reaction ID" value="UER00332"/>
</dbReference>
<dbReference type="Proteomes" id="UP000002676">
    <property type="component" value="Chromosome"/>
</dbReference>
<dbReference type="GO" id="GO:0005524">
    <property type="term" value="F:ATP binding"/>
    <property type="evidence" value="ECO:0007669"/>
    <property type="project" value="UniProtKB-KW"/>
</dbReference>
<dbReference type="GO" id="GO:0004515">
    <property type="term" value="F:nicotinate-nucleotide adenylyltransferase activity"/>
    <property type="evidence" value="ECO:0007669"/>
    <property type="project" value="UniProtKB-UniRule"/>
</dbReference>
<dbReference type="GO" id="GO:0009435">
    <property type="term" value="P:NAD biosynthetic process"/>
    <property type="evidence" value="ECO:0007669"/>
    <property type="project" value="UniProtKB-UniRule"/>
</dbReference>
<dbReference type="CDD" id="cd02165">
    <property type="entry name" value="NMNAT"/>
    <property type="match status" value="1"/>
</dbReference>
<dbReference type="Gene3D" id="3.40.50.620">
    <property type="entry name" value="HUPs"/>
    <property type="match status" value="1"/>
</dbReference>
<dbReference type="HAMAP" id="MF_00244">
    <property type="entry name" value="NaMN_adenylyltr"/>
    <property type="match status" value="1"/>
</dbReference>
<dbReference type="InterPro" id="IPR004821">
    <property type="entry name" value="Cyt_trans-like"/>
</dbReference>
<dbReference type="InterPro" id="IPR005248">
    <property type="entry name" value="NadD/NMNAT"/>
</dbReference>
<dbReference type="InterPro" id="IPR014729">
    <property type="entry name" value="Rossmann-like_a/b/a_fold"/>
</dbReference>
<dbReference type="NCBIfam" id="TIGR00125">
    <property type="entry name" value="cyt_tran_rel"/>
    <property type="match status" value="1"/>
</dbReference>
<dbReference type="NCBIfam" id="TIGR00482">
    <property type="entry name" value="nicotinate (nicotinamide) nucleotide adenylyltransferase"/>
    <property type="match status" value="1"/>
</dbReference>
<dbReference type="PANTHER" id="PTHR39321">
    <property type="entry name" value="NICOTINATE-NUCLEOTIDE ADENYLYLTRANSFERASE-RELATED"/>
    <property type="match status" value="1"/>
</dbReference>
<dbReference type="PANTHER" id="PTHR39321:SF3">
    <property type="entry name" value="PHOSPHOPANTETHEINE ADENYLYLTRANSFERASE"/>
    <property type="match status" value="1"/>
</dbReference>
<dbReference type="Pfam" id="PF01467">
    <property type="entry name" value="CTP_transf_like"/>
    <property type="match status" value="1"/>
</dbReference>
<dbReference type="SUPFAM" id="SSF52374">
    <property type="entry name" value="Nucleotidylyl transferase"/>
    <property type="match status" value="1"/>
</dbReference>
<accession>Q7VWE6</accession>
<protein>
    <recommendedName>
        <fullName evidence="1">Probable nicotinate-nucleotide adenylyltransferase</fullName>
        <ecNumber evidence="1">2.7.7.18</ecNumber>
    </recommendedName>
    <alternativeName>
        <fullName evidence="1">Deamido-NAD(+) diphosphorylase</fullName>
    </alternativeName>
    <alternativeName>
        <fullName evidence="1">Deamido-NAD(+) pyrophosphorylase</fullName>
    </alternativeName>
    <alternativeName>
        <fullName evidence="1">Nicotinate mononucleotide adenylyltransferase</fullName>
        <shortName evidence="1">NaMN adenylyltransferase</shortName>
    </alternativeName>
</protein>
<sequence>MGVTRIGLLGGSFDPVHVAHIALADTARQFLGLDQVQLIPAANPWQRQPLKASAPHRLRMLELAIAGHPALAINPVEIERGGATYTADTVRALPGGPQYFWLLGTDQLQNFCTWRDWQDIAARIELAVATRPGASIAPPAELAAWLAAHRRQLHELPFAPMAVSASDIRQRLAAGAATDGLLPEPVAAYIATHHLYR</sequence>
<evidence type="ECO:0000255" key="1">
    <source>
        <dbReference type="HAMAP-Rule" id="MF_00244"/>
    </source>
</evidence>